<organism>
    <name type="scientific">Pyrococcus abyssi (strain GE5 / Orsay)</name>
    <dbReference type="NCBI Taxonomy" id="272844"/>
    <lineage>
        <taxon>Archaea</taxon>
        <taxon>Methanobacteriati</taxon>
        <taxon>Methanobacteriota</taxon>
        <taxon>Thermococci</taxon>
        <taxon>Thermococcales</taxon>
        <taxon>Thermococcaceae</taxon>
        <taxon>Pyrococcus</taxon>
    </lineage>
</organism>
<name>PTH_PYRAB</name>
<sequence length="118" mass="13135">MFKFKQVIVVRKDLKLSKGKLAVQVAHGAVTAAFKAYKEKREWFEKWFHEGQKKVVVKVESLDELFKLKAEAEKLNLPTALIQDAGLTEIPPGTITVLAIGPGPSEIIDKVTGHLKLL</sequence>
<dbReference type="EC" id="3.1.1.29" evidence="1"/>
<dbReference type="EMBL" id="AJ248284">
    <property type="protein sequence ID" value="CAB49543.1"/>
    <property type="status" value="ALT_INIT"/>
    <property type="molecule type" value="Genomic_DNA"/>
</dbReference>
<dbReference type="EMBL" id="HE613800">
    <property type="protein sequence ID" value="CCE70013.1"/>
    <property type="molecule type" value="Genomic_DNA"/>
</dbReference>
<dbReference type="PIR" id="H75182">
    <property type="entry name" value="H75182"/>
</dbReference>
<dbReference type="SMR" id="Q9V108"/>
<dbReference type="STRING" id="272844.PAB0429"/>
<dbReference type="KEGG" id="pab:PAB0429"/>
<dbReference type="PATRIC" id="fig|272844.11.peg.659"/>
<dbReference type="eggNOG" id="arCOG04228">
    <property type="taxonomic scope" value="Archaea"/>
</dbReference>
<dbReference type="HOGENOM" id="CLU_073661_2_2_2"/>
<dbReference type="Proteomes" id="UP000000810">
    <property type="component" value="Chromosome"/>
</dbReference>
<dbReference type="Proteomes" id="UP000009139">
    <property type="component" value="Chromosome"/>
</dbReference>
<dbReference type="GO" id="GO:0005829">
    <property type="term" value="C:cytosol"/>
    <property type="evidence" value="ECO:0007669"/>
    <property type="project" value="TreeGrafter"/>
</dbReference>
<dbReference type="GO" id="GO:0004045">
    <property type="term" value="F:peptidyl-tRNA hydrolase activity"/>
    <property type="evidence" value="ECO:0007669"/>
    <property type="project" value="UniProtKB-UniRule"/>
</dbReference>
<dbReference type="GO" id="GO:0006412">
    <property type="term" value="P:translation"/>
    <property type="evidence" value="ECO:0007669"/>
    <property type="project" value="UniProtKB-UniRule"/>
</dbReference>
<dbReference type="CDD" id="cd02430">
    <property type="entry name" value="PTH2"/>
    <property type="match status" value="1"/>
</dbReference>
<dbReference type="FunFam" id="3.40.1490.10:FF:000001">
    <property type="entry name" value="Peptidyl-tRNA hydrolase 2"/>
    <property type="match status" value="1"/>
</dbReference>
<dbReference type="Gene3D" id="3.40.1490.10">
    <property type="entry name" value="Bit1"/>
    <property type="match status" value="1"/>
</dbReference>
<dbReference type="HAMAP" id="MF_00628">
    <property type="entry name" value="Pept_tRNA_hydro_arch"/>
    <property type="match status" value="1"/>
</dbReference>
<dbReference type="InterPro" id="IPR023476">
    <property type="entry name" value="Pep_tRNA_hydro_II_dom_sf"/>
</dbReference>
<dbReference type="InterPro" id="IPR034759">
    <property type="entry name" value="Pept_tRNA_hydro_arch"/>
</dbReference>
<dbReference type="InterPro" id="IPR002833">
    <property type="entry name" value="PTH2"/>
</dbReference>
<dbReference type="NCBIfam" id="TIGR00283">
    <property type="entry name" value="arch_pth2"/>
    <property type="match status" value="1"/>
</dbReference>
<dbReference type="NCBIfam" id="NF003314">
    <property type="entry name" value="PRK04322.1"/>
    <property type="match status" value="1"/>
</dbReference>
<dbReference type="PANTHER" id="PTHR12649">
    <property type="entry name" value="PEPTIDYL-TRNA HYDROLASE 2"/>
    <property type="match status" value="1"/>
</dbReference>
<dbReference type="PANTHER" id="PTHR12649:SF11">
    <property type="entry name" value="PEPTIDYL-TRNA HYDROLASE 2, MITOCHONDRIAL"/>
    <property type="match status" value="1"/>
</dbReference>
<dbReference type="Pfam" id="PF01981">
    <property type="entry name" value="PTH2"/>
    <property type="match status" value="1"/>
</dbReference>
<dbReference type="SUPFAM" id="SSF102462">
    <property type="entry name" value="Peptidyl-tRNA hydrolase II"/>
    <property type="match status" value="1"/>
</dbReference>
<accession>Q9V108</accession>
<accession>G8ZJ86</accession>
<feature type="chain" id="PRO_0000120298" description="Peptidyl-tRNA hydrolase">
    <location>
        <begin position="1"/>
        <end position="118"/>
    </location>
</feature>
<proteinExistence type="inferred from homology"/>
<evidence type="ECO:0000255" key="1">
    <source>
        <dbReference type="HAMAP-Rule" id="MF_00628"/>
    </source>
</evidence>
<evidence type="ECO:0000305" key="2"/>
<gene>
    <name evidence="1" type="primary">pth</name>
    <name type="ordered locus">PYRAB06210</name>
    <name type="ORF">PAB0429</name>
</gene>
<keyword id="KW-0963">Cytoplasm</keyword>
<keyword id="KW-0378">Hydrolase</keyword>
<protein>
    <recommendedName>
        <fullName evidence="1">Peptidyl-tRNA hydrolase</fullName>
        <shortName evidence="1">PTH</shortName>
        <ecNumber evidence="1">3.1.1.29</ecNumber>
    </recommendedName>
</protein>
<comment type="function">
    <text evidence="1">The natural substrate for this enzyme may be peptidyl-tRNAs which drop off the ribosome during protein synthesis.</text>
</comment>
<comment type="catalytic activity">
    <reaction evidence="1">
        <text>an N-acyl-L-alpha-aminoacyl-tRNA + H2O = an N-acyl-L-amino acid + a tRNA + H(+)</text>
        <dbReference type="Rhea" id="RHEA:54448"/>
        <dbReference type="Rhea" id="RHEA-COMP:10123"/>
        <dbReference type="Rhea" id="RHEA-COMP:13883"/>
        <dbReference type="ChEBI" id="CHEBI:15377"/>
        <dbReference type="ChEBI" id="CHEBI:15378"/>
        <dbReference type="ChEBI" id="CHEBI:59874"/>
        <dbReference type="ChEBI" id="CHEBI:78442"/>
        <dbReference type="ChEBI" id="CHEBI:138191"/>
        <dbReference type="EC" id="3.1.1.29"/>
    </reaction>
</comment>
<comment type="subcellular location">
    <subcellularLocation>
        <location evidence="1">Cytoplasm</location>
    </subcellularLocation>
</comment>
<comment type="similarity">
    <text evidence="1">Belongs to the PTH2 family.</text>
</comment>
<comment type="sequence caution" evidence="2">
    <conflict type="erroneous initiation">
        <sequence resource="EMBL-CDS" id="CAB49543"/>
    </conflict>
    <text>Extended N-terminus.</text>
</comment>
<reference key="1">
    <citation type="journal article" date="2003" name="Mol. Microbiol.">
        <title>An integrated analysis of the genome of the hyperthermophilic archaeon Pyrococcus abyssi.</title>
        <authorList>
            <person name="Cohen G.N."/>
            <person name="Barbe V."/>
            <person name="Flament D."/>
            <person name="Galperin M."/>
            <person name="Heilig R."/>
            <person name="Lecompte O."/>
            <person name="Poch O."/>
            <person name="Prieur D."/>
            <person name="Querellou J."/>
            <person name="Ripp R."/>
            <person name="Thierry J.-C."/>
            <person name="Van der Oost J."/>
            <person name="Weissenbach J."/>
            <person name="Zivanovic Y."/>
            <person name="Forterre P."/>
        </authorList>
    </citation>
    <scope>NUCLEOTIDE SEQUENCE [LARGE SCALE GENOMIC DNA]</scope>
    <source>
        <strain>GE5 / Orsay</strain>
    </source>
</reference>
<reference key="2">
    <citation type="journal article" date="2012" name="Curr. Microbiol.">
        <title>Re-annotation of two hyperthermophilic archaea Pyrococcus abyssi GE5 and Pyrococcus furiosus DSM 3638.</title>
        <authorList>
            <person name="Gao J."/>
            <person name="Wang J."/>
        </authorList>
    </citation>
    <scope>GENOME REANNOTATION</scope>
    <source>
        <strain>GE5 / Orsay</strain>
    </source>
</reference>